<keyword id="KW-1185">Reference proteome</keyword>
<keyword id="KW-0943">RNA-mediated gene silencing</keyword>
<evidence type="ECO:0000250" key="1"/>
<evidence type="ECO:0000255" key="2">
    <source>
        <dbReference type="PROSITE-ProRule" id="PRU00142"/>
    </source>
</evidence>
<evidence type="ECO:0000255" key="3">
    <source>
        <dbReference type="PROSITE-ProRule" id="PRU00150"/>
    </source>
</evidence>
<evidence type="ECO:0000256" key="4">
    <source>
        <dbReference type="SAM" id="MobiDB-lite"/>
    </source>
</evidence>
<evidence type="ECO:0000305" key="5"/>
<proteinExistence type="evidence at transcript level"/>
<accession>Q5NBN9</accession>
<accession>Q0JNP3</accession>
<reference key="1">
    <citation type="journal article" date="2002" name="Nature">
        <title>The genome sequence and structure of rice chromosome 1.</title>
        <authorList>
            <person name="Sasaki T."/>
            <person name="Matsumoto T."/>
            <person name="Yamamoto K."/>
            <person name="Sakata K."/>
            <person name="Baba T."/>
            <person name="Katayose Y."/>
            <person name="Wu J."/>
            <person name="Niimura Y."/>
            <person name="Cheng Z."/>
            <person name="Nagamura Y."/>
            <person name="Antonio B.A."/>
            <person name="Kanamori H."/>
            <person name="Hosokawa S."/>
            <person name="Masukawa M."/>
            <person name="Arikawa K."/>
            <person name="Chiden Y."/>
            <person name="Hayashi M."/>
            <person name="Okamoto M."/>
            <person name="Ando T."/>
            <person name="Aoki H."/>
            <person name="Arita K."/>
            <person name="Hamada M."/>
            <person name="Harada C."/>
            <person name="Hijishita S."/>
            <person name="Honda M."/>
            <person name="Ichikawa Y."/>
            <person name="Idonuma A."/>
            <person name="Iijima M."/>
            <person name="Ikeda M."/>
            <person name="Ikeno M."/>
            <person name="Ito S."/>
            <person name="Ito T."/>
            <person name="Ito Y."/>
            <person name="Ito Y."/>
            <person name="Iwabuchi A."/>
            <person name="Kamiya K."/>
            <person name="Karasawa W."/>
            <person name="Katagiri S."/>
            <person name="Kikuta A."/>
            <person name="Kobayashi N."/>
            <person name="Kono I."/>
            <person name="Machita K."/>
            <person name="Maehara T."/>
            <person name="Mizuno H."/>
            <person name="Mizubayashi T."/>
            <person name="Mukai Y."/>
            <person name="Nagasaki H."/>
            <person name="Nakashima M."/>
            <person name="Nakama Y."/>
            <person name="Nakamichi Y."/>
            <person name="Nakamura M."/>
            <person name="Namiki N."/>
            <person name="Negishi M."/>
            <person name="Ohta I."/>
            <person name="Ono N."/>
            <person name="Saji S."/>
            <person name="Sakai K."/>
            <person name="Shibata M."/>
            <person name="Shimokawa T."/>
            <person name="Shomura A."/>
            <person name="Song J."/>
            <person name="Takazaki Y."/>
            <person name="Terasawa K."/>
            <person name="Tsuji K."/>
            <person name="Waki K."/>
            <person name="Yamagata H."/>
            <person name="Yamane H."/>
            <person name="Yoshiki S."/>
            <person name="Yoshihara R."/>
            <person name="Yukawa K."/>
            <person name="Zhong H."/>
            <person name="Iwama H."/>
            <person name="Endo T."/>
            <person name="Ito H."/>
            <person name="Hahn J.H."/>
            <person name="Kim H.-I."/>
            <person name="Eun M.-Y."/>
            <person name="Yano M."/>
            <person name="Jiang J."/>
            <person name="Gojobori T."/>
        </authorList>
    </citation>
    <scope>NUCLEOTIDE SEQUENCE [LARGE SCALE GENOMIC DNA]</scope>
    <source>
        <strain>cv. Nipponbare</strain>
    </source>
</reference>
<reference key="2">
    <citation type="journal article" date="2005" name="Nature">
        <title>The map-based sequence of the rice genome.</title>
        <authorList>
            <consortium name="International rice genome sequencing project (IRGSP)"/>
        </authorList>
    </citation>
    <scope>NUCLEOTIDE SEQUENCE [LARGE SCALE GENOMIC DNA]</scope>
    <source>
        <strain>cv. Nipponbare</strain>
    </source>
</reference>
<reference key="3">
    <citation type="journal article" date="2008" name="Nucleic Acids Res.">
        <title>The rice annotation project database (RAP-DB): 2008 update.</title>
        <authorList>
            <consortium name="The rice annotation project (RAP)"/>
        </authorList>
    </citation>
    <scope>GENOME REANNOTATION</scope>
    <source>
        <strain>cv. Nipponbare</strain>
    </source>
</reference>
<reference key="4">
    <citation type="journal article" date="2013" name="Rice">
        <title>Improvement of the Oryza sativa Nipponbare reference genome using next generation sequence and optical map data.</title>
        <authorList>
            <person name="Kawahara Y."/>
            <person name="de la Bastide M."/>
            <person name="Hamilton J.P."/>
            <person name="Kanamori H."/>
            <person name="McCombie W.R."/>
            <person name="Ouyang S."/>
            <person name="Schwartz D.C."/>
            <person name="Tanaka T."/>
            <person name="Wu J."/>
            <person name="Zhou S."/>
            <person name="Childs K.L."/>
            <person name="Davidson R.M."/>
            <person name="Lin H."/>
            <person name="Quesada-Ocampo L."/>
            <person name="Vaillancourt B."/>
            <person name="Sakai H."/>
            <person name="Lee S.S."/>
            <person name="Kim J."/>
            <person name="Numa H."/>
            <person name="Itoh T."/>
            <person name="Buell C.R."/>
            <person name="Matsumoto T."/>
        </authorList>
    </citation>
    <scope>GENOME REANNOTATION</scope>
    <source>
        <strain>cv. Nipponbare</strain>
    </source>
</reference>
<reference key="5">
    <citation type="journal article" date="2008" name="BMC Genomics">
        <title>Genome-wide identification, organization and phylogenetic analysis of dicer-like, argonaute and RNA-dependent RNA polymerase gene families and their expression analysis during reproductive development and stress in rice.</title>
        <authorList>
            <person name="Kapoor M."/>
            <person name="Arora R."/>
            <person name="Lama T."/>
            <person name="Nijhawan A."/>
            <person name="Khurana J.P."/>
            <person name="Tyagi A.K."/>
            <person name="Kapoor S."/>
        </authorList>
    </citation>
    <scope>GENE FAMILY</scope>
    <scope>NOMENCLATURE</scope>
</reference>
<dbReference type="EMBL" id="AP000836">
    <property type="protein sequence ID" value="BAD81109.1"/>
    <property type="status" value="ALT_SEQ"/>
    <property type="molecule type" value="Genomic_DNA"/>
</dbReference>
<dbReference type="EMBL" id="AP008207">
    <property type="protein sequence ID" value="BAF04635.2"/>
    <property type="status" value="ALT_SEQ"/>
    <property type="molecule type" value="Genomic_DNA"/>
</dbReference>
<dbReference type="EMBL" id="AP014957">
    <property type="status" value="NOT_ANNOTATED_CDS"/>
    <property type="molecule type" value="Genomic_DNA"/>
</dbReference>
<dbReference type="SMR" id="Q5NBN9"/>
<dbReference type="FunCoup" id="Q5NBN9">
    <property type="interactions" value="1"/>
</dbReference>
<dbReference type="STRING" id="39947.Q5NBN9"/>
<dbReference type="PaxDb" id="39947-Q5NBN9"/>
<dbReference type="KEGG" id="dosa:Os01g0275200"/>
<dbReference type="eggNOG" id="KOG1041">
    <property type="taxonomic scope" value="Eukaryota"/>
</dbReference>
<dbReference type="InParanoid" id="Q5NBN9"/>
<dbReference type="Proteomes" id="UP000000763">
    <property type="component" value="Chromosome 1"/>
</dbReference>
<dbReference type="Proteomes" id="UP000059680">
    <property type="component" value="Chromosome 1"/>
</dbReference>
<dbReference type="GO" id="GO:0005737">
    <property type="term" value="C:cytoplasm"/>
    <property type="evidence" value="ECO:0000318"/>
    <property type="project" value="GO_Central"/>
</dbReference>
<dbReference type="GO" id="GO:0005634">
    <property type="term" value="C:nucleus"/>
    <property type="evidence" value="ECO:0000318"/>
    <property type="project" value="GO_Central"/>
</dbReference>
<dbReference type="GO" id="GO:0003723">
    <property type="term" value="F:RNA binding"/>
    <property type="evidence" value="ECO:0000318"/>
    <property type="project" value="GO_Central"/>
</dbReference>
<dbReference type="GO" id="GO:0004521">
    <property type="term" value="F:RNA endonuclease activity"/>
    <property type="evidence" value="ECO:0000318"/>
    <property type="project" value="GO_Central"/>
</dbReference>
<dbReference type="GO" id="GO:0031047">
    <property type="term" value="P:regulatory ncRNA-mediated gene silencing"/>
    <property type="evidence" value="ECO:0000318"/>
    <property type="project" value="GO_Central"/>
</dbReference>
<dbReference type="CDD" id="cd02846">
    <property type="entry name" value="PAZ_argonaute_like"/>
    <property type="match status" value="1"/>
</dbReference>
<dbReference type="CDD" id="cd04657">
    <property type="entry name" value="Piwi_ago-like"/>
    <property type="match status" value="1"/>
</dbReference>
<dbReference type="FunFam" id="3.30.420.10:FF:000091">
    <property type="entry name" value="Protein argonaute 3"/>
    <property type="match status" value="1"/>
</dbReference>
<dbReference type="FunFam" id="2.170.260.10:FF:000008">
    <property type="entry name" value="Protein argonaute 7"/>
    <property type="match status" value="1"/>
</dbReference>
<dbReference type="Gene3D" id="3.40.50.2300">
    <property type="match status" value="1"/>
</dbReference>
<dbReference type="Gene3D" id="2.170.260.10">
    <property type="entry name" value="paz domain"/>
    <property type="match status" value="1"/>
</dbReference>
<dbReference type="Gene3D" id="3.30.420.10">
    <property type="entry name" value="Ribonuclease H-like superfamily/Ribonuclease H"/>
    <property type="match status" value="1"/>
</dbReference>
<dbReference type="InterPro" id="IPR014811">
    <property type="entry name" value="ArgoL1"/>
</dbReference>
<dbReference type="InterPro" id="IPR032472">
    <property type="entry name" value="ArgoL2"/>
</dbReference>
<dbReference type="InterPro" id="IPR032474">
    <property type="entry name" value="Argonaute_N"/>
</dbReference>
<dbReference type="InterPro" id="IPR003100">
    <property type="entry name" value="PAZ_dom"/>
</dbReference>
<dbReference type="InterPro" id="IPR036085">
    <property type="entry name" value="PAZ_dom_sf"/>
</dbReference>
<dbReference type="InterPro" id="IPR003165">
    <property type="entry name" value="Piwi"/>
</dbReference>
<dbReference type="InterPro" id="IPR045246">
    <property type="entry name" value="Piwi_ago-like"/>
</dbReference>
<dbReference type="InterPro" id="IPR012337">
    <property type="entry name" value="RNaseH-like_sf"/>
</dbReference>
<dbReference type="InterPro" id="IPR036397">
    <property type="entry name" value="RNaseH_sf"/>
</dbReference>
<dbReference type="PANTHER" id="PTHR22891">
    <property type="entry name" value="EUKARYOTIC TRANSLATION INITIATION FACTOR 2C"/>
    <property type="match status" value="1"/>
</dbReference>
<dbReference type="Pfam" id="PF08699">
    <property type="entry name" value="ArgoL1"/>
    <property type="match status" value="1"/>
</dbReference>
<dbReference type="Pfam" id="PF16488">
    <property type="entry name" value="ArgoL2"/>
    <property type="match status" value="1"/>
</dbReference>
<dbReference type="Pfam" id="PF16486">
    <property type="entry name" value="ArgoN"/>
    <property type="match status" value="1"/>
</dbReference>
<dbReference type="Pfam" id="PF02170">
    <property type="entry name" value="PAZ"/>
    <property type="match status" value="1"/>
</dbReference>
<dbReference type="Pfam" id="PF02171">
    <property type="entry name" value="Piwi"/>
    <property type="match status" value="1"/>
</dbReference>
<dbReference type="SMART" id="SM01163">
    <property type="entry name" value="DUF1785"/>
    <property type="match status" value="1"/>
</dbReference>
<dbReference type="SMART" id="SM00949">
    <property type="entry name" value="PAZ"/>
    <property type="match status" value="1"/>
</dbReference>
<dbReference type="SMART" id="SM00950">
    <property type="entry name" value="Piwi"/>
    <property type="match status" value="1"/>
</dbReference>
<dbReference type="SUPFAM" id="SSF101690">
    <property type="entry name" value="PAZ domain"/>
    <property type="match status" value="1"/>
</dbReference>
<dbReference type="SUPFAM" id="SSF53098">
    <property type="entry name" value="Ribonuclease H-like"/>
    <property type="match status" value="1"/>
</dbReference>
<dbReference type="PROSITE" id="PS50821">
    <property type="entry name" value="PAZ"/>
    <property type="match status" value="1"/>
</dbReference>
<dbReference type="PROSITE" id="PS50822">
    <property type="entry name" value="PIWI"/>
    <property type="match status" value="1"/>
</dbReference>
<sequence>MESHGDEGEPSAMAKPPKKLPMSRKGFGTRGQSIQLLTNHFRVSVRRMDGHFYHYHVEVKYEDGGPVEAKGVCRRVVDKLQETYASELAGREFAYNGEKGLFTAGALLQTKHQFVVVMEDASSSGRTTTRRSSGGDDGSPGGSDRKRMKRPMAVKKFMVEISFAAKDPMSAIAEVLRGQETENSMEALRVLDITLRQHSAKHARDTASCPSYPSAMDGWMKTGVPKGGREKISCRGFHSSFRPTDSGLSLNVDVSTTMIVRPGPVIEFLLFNQNIKNPHEIDWGKAKCALKNLRIKTTHTGSEFRIIGLSEDTCYSQTFQIKRKNGNGGSDTVEEVTVFEYYRKNWKIDLKGSAHFPCLNVGKPKRPTYIPLELCHLVPLQRYKKALSTLQRSTLVERSRQNPQERMFVLSGVLRDSDYNSVPMLRECGISIAQEFTQVAARVLPAPKLKSGDGEDIFARNGRWNFNKNRLIQPKRVQRWVVVNFSAQCNAHHLAQRLIHCGNLKGLPVDPEDHVFQERSHMGRERAETRVNDMFQQLLSGDKPSFVLCVLPERKNCDIYGPWKRMCLVKYGIVTQCLAPTKINDQYLTNVLLKINAKLGGLNSLLQIERNQAIPLLSKTPTIILGMDVSHGSPGRDDVPSVAAVVSSLEWPLISKYKASVCTQSPRLEMIDSLFKLVGNEDHVIIRESLMDFYNSSRGHKDGVSEGQFNQVLNIELAQIIKACEFLANEKNDSEWSPKFTVIVAQKNHHTKFFQTDRSNKVVNVPPGTVVDKGICHPRNCDFYMCAHAGMIGTTRPTHYHVLHDENNFTPDDLQELVHNLSYVYQRSTTAISGVAPICYAHLAAAQVSQFVRLDDAASEGSGDGGAPPRPVPELPRLHPDVRQSMFFC</sequence>
<organism>
    <name type="scientific">Oryza sativa subsp. japonica</name>
    <name type="common">Rice</name>
    <dbReference type="NCBI Taxonomy" id="39947"/>
    <lineage>
        <taxon>Eukaryota</taxon>
        <taxon>Viridiplantae</taxon>
        <taxon>Streptophyta</taxon>
        <taxon>Embryophyta</taxon>
        <taxon>Tracheophyta</taxon>
        <taxon>Spermatophyta</taxon>
        <taxon>Magnoliopsida</taxon>
        <taxon>Liliopsida</taxon>
        <taxon>Poales</taxon>
        <taxon>Poaceae</taxon>
        <taxon>BOP clade</taxon>
        <taxon>Oryzoideae</taxon>
        <taxon>Oryzeae</taxon>
        <taxon>Oryzinae</taxon>
        <taxon>Oryza</taxon>
        <taxon>Oryza sativa</taxon>
    </lineage>
</organism>
<feature type="chain" id="PRO_0000378438" description="Protein argonaute 15">
    <location>
        <begin position="1"/>
        <end position="889"/>
    </location>
</feature>
<feature type="domain" description="PAZ" evidence="2">
    <location>
        <begin position="264"/>
        <end position="379"/>
    </location>
</feature>
<feature type="domain" description="Piwi" evidence="3">
    <location>
        <begin position="546"/>
        <end position="853"/>
    </location>
</feature>
<feature type="region of interest" description="Disordered" evidence="4">
    <location>
        <begin position="1"/>
        <end position="26"/>
    </location>
</feature>
<feature type="region of interest" description="Disordered" evidence="4">
    <location>
        <begin position="119"/>
        <end position="150"/>
    </location>
</feature>
<feature type="region of interest" description="Disordered" evidence="4">
    <location>
        <begin position="857"/>
        <end position="878"/>
    </location>
</feature>
<feature type="compositionally biased region" description="Low complexity" evidence="4">
    <location>
        <begin position="122"/>
        <end position="132"/>
    </location>
</feature>
<protein>
    <recommendedName>
        <fullName>Protein argonaute 15</fullName>
        <shortName>OsAGO15</shortName>
    </recommendedName>
</protein>
<gene>
    <name type="primary">AGO15</name>
    <name type="ordered locus">Os01g0275200/Os01g0275300</name>
    <name type="ordered locus">LOC_Os01g16850/LOC_Os01g16860</name>
    <name type="ORF">P0038F12.10</name>
</gene>
<comment type="function">
    <text evidence="1">Probably involved in the RNA silencing pathway. May bind to short RNAs such as microRNAs (miRNAs) or short interfering RNAs (siRNAs), and represses the translation of mRNAs which are complementary to them (By similarity).</text>
</comment>
<comment type="similarity">
    <text evidence="5">Belongs to the argonaute family. Ago subfamily.</text>
</comment>
<comment type="sequence caution" evidence="5">
    <conflict type="erroneous gene model prediction">
        <sequence resource="EMBL-CDS" id="BAD81109"/>
    </conflict>
</comment>
<comment type="sequence caution" evidence="5">
    <conflict type="erroneous gene model prediction">
        <sequence resource="EMBL-CDS" id="BAF04635"/>
    </conflict>
</comment>
<name>AGO15_ORYSJ</name>